<proteinExistence type="inferred from homology"/>
<accession>Q3A8C3</accession>
<gene>
    <name evidence="1" type="primary">dnaJ</name>
    <name type="ordered locus">Pcar_0106</name>
</gene>
<comment type="function">
    <text evidence="1">Participates actively in the response to hyperosmotic and heat shock by preventing the aggregation of stress-denatured proteins and by disaggregating proteins, also in an autonomous, DnaK-independent fashion. Unfolded proteins bind initially to DnaJ; upon interaction with the DnaJ-bound protein, DnaK hydrolyzes its bound ATP, resulting in the formation of a stable complex. GrpE releases ADP from DnaK; ATP binding to DnaK triggers the release of the substrate protein, thus completing the reaction cycle. Several rounds of ATP-dependent interactions between DnaJ, DnaK and GrpE are required for fully efficient folding. Also involved, together with DnaK and GrpE, in the DNA replication of plasmids through activation of initiation proteins.</text>
</comment>
<comment type="cofactor">
    <cofactor evidence="1">
        <name>Zn(2+)</name>
        <dbReference type="ChEBI" id="CHEBI:29105"/>
    </cofactor>
    <text evidence="1">Binds 2 Zn(2+) ions per monomer.</text>
</comment>
<comment type="subunit">
    <text evidence="1">Homodimer.</text>
</comment>
<comment type="subcellular location">
    <subcellularLocation>
        <location evidence="1">Cytoplasm</location>
    </subcellularLocation>
</comment>
<comment type="domain">
    <text evidence="1">The J domain is necessary and sufficient to stimulate DnaK ATPase activity. Zinc center 1 plays an important role in the autonomous, DnaK-independent chaperone activity of DnaJ. Zinc center 2 is essential for interaction with DnaK and for DnaJ activity.</text>
</comment>
<comment type="similarity">
    <text evidence="1">Belongs to the DnaJ family.</text>
</comment>
<feature type="chain" id="PRO_1000085241" description="Chaperone protein DnaJ">
    <location>
        <begin position="1"/>
        <end position="373"/>
    </location>
</feature>
<feature type="domain" description="J" evidence="1">
    <location>
        <begin position="5"/>
        <end position="70"/>
    </location>
</feature>
<feature type="repeat" description="CXXCXGXG motif">
    <location>
        <begin position="149"/>
        <end position="156"/>
    </location>
</feature>
<feature type="repeat" description="CXXCXGXG motif">
    <location>
        <begin position="166"/>
        <end position="173"/>
    </location>
</feature>
<feature type="repeat" description="CXXCXGXG motif">
    <location>
        <begin position="188"/>
        <end position="195"/>
    </location>
</feature>
<feature type="repeat" description="CXXCXGXG motif">
    <location>
        <begin position="202"/>
        <end position="209"/>
    </location>
</feature>
<feature type="zinc finger region" description="CR-type" evidence="1">
    <location>
        <begin position="136"/>
        <end position="214"/>
    </location>
</feature>
<feature type="binding site" evidence="1">
    <location>
        <position position="149"/>
    </location>
    <ligand>
        <name>Zn(2+)</name>
        <dbReference type="ChEBI" id="CHEBI:29105"/>
        <label>1</label>
    </ligand>
</feature>
<feature type="binding site" evidence="1">
    <location>
        <position position="152"/>
    </location>
    <ligand>
        <name>Zn(2+)</name>
        <dbReference type="ChEBI" id="CHEBI:29105"/>
        <label>1</label>
    </ligand>
</feature>
<feature type="binding site" evidence="1">
    <location>
        <position position="166"/>
    </location>
    <ligand>
        <name>Zn(2+)</name>
        <dbReference type="ChEBI" id="CHEBI:29105"/>
        <label>2</label>
    </ligand>
</feature>
<feature type="binding site" evidence="1">
    <location>
        <position position="169"/>
    </location>
    <ligand>
        <name>Zn(2+)</name>
        <dbReference type="ChEBI" id="CHEBI:29105"/>
        <label>2</label>
    </ligand>
</feature>
<feature type="binding site" evidence="1">
    <location>
        <position position="188"/>
    </location>
    <ligand>
        <name>Zn(2+)</name>
        <dbReference type="ChEBI" id="CHEBI:29105"/>
        <label>2</label>
    </ligand>
</feature>
<feature type="binding site" evidence="1">
    <location>
        <position position="191"/>
    </location>
    <ligand>
        <name>Zn(2+)</name>
        <dbReference type="ChEBI" id="CHEBI:29105"/>
        <label>2</label>
    </ligand>
</feature>
<feature type="binding site" evidence="1">
    <location>
        <position position="202"/>
    </location>
    <ligand>
        <name>Zn(2+)</name>
        <dbReference type="ChEBI" id="CHEBI:29105"/>
        <label>1</label>
    </ligand>
</feature>
<feature type="binding site" evidence="1">
    <location>
        <position position="205"/>
    </location>
    <ligand>
        <name>Zn(2+)</name>
        <dbReference type="ChEBI" id="CHEBI:29105"/>
        <label>1</label>
    </ligand>
</feature>
<sequence length="373" mass="40433">MSKRDYYEVLGVHRNASETEIKKAYRKLAIKYHPDKNAGDKAAEDKFKEISEAYSILSDTQQRVIYDQYGHAGLNGGGGGGGSYSSGGFGGTPFEDLFGDIFGDIFGGRGSQRSRGRRGDDLRYNLSINFEEAAFGLETKIQIPRHQTCGTCDGIGAKPGTTPRVCPTCQGAGQVRVQQGYFSLTRPCPECNGEGQIIDQPCEECHGSGRVRGKRTLSLKIPAGVETGSRLKLSSEGEPGLNGGPPGDLYVVISVQDHPLFQRDGQHVICEIPISFPQAALGCELEVPTLTEKVNVKVTPGTQSGKVIKLQGQGFPSLQGYARGDQLVVLRVEVPTSLTDRQKELLEEFAKEGGEEIHPMGKTFFDKVKELFG</sequence>
<protein>
    <recommendedName>
        <fullName evidence="1">Chaperone protein DnaJ</fullName>
    </recommendedName>
</protein>
<name>DNAJ_SYNC1</name>
<dbReference type="EMBL" id="CP000142">
    <property type="protein sequence ID" value="ABA87369.1"/>
    <property type="molecule type" value="Genomic_DNA"/>
</dbReference>
<dbReference type="RefSeq" id="WP_011339758.1">
    <property type="nucleotide sequence ID" value="NC_007498.2"/>
</dbReference>
<dbReference type="SMR" id="Q3A8C3"/>
<dbReference type="STRING" id="338963.Pcar_0106"/>
<dbReference type="KEGG" id="pca:Pcar_0106"/>
<dbReference type="eggNOG" id="COG0484">
    <property type="taxonomic scope" value="Bacteria"/>
</dbReference>
<dbReference type="HOGENOM" id="CLU_017633_0_7_7"/>
<dbReference type="OrthoDB" id="9779889at2"/>
<dbReference type="Proteomes" id="UP000002534">
    <property type="component" value="Chromosome"/>
</dbReference>
<dbReference type="GO" id="GO:0005737">
    <property type="term" value="C:cytoplasm"/>
    <property type="evidence" value="ECO:0007669"/>
    <property type="project" value="UniProtKB-SubCell"/>
</dbReference>
<dbReference type="GO" id="GO:0005524">
    <property type="term" value="F:ATP binding"/>
    <property type="evidence" value="ECO:0007669"/>
    <property type="project" value="InterPro"/>
</dbReference>
<dbReference type="GO" id="GO:0031072">
    <property type="term" value="F:heat shock protein binding"/>
    <property type="evidence" value="ECO:0007669"/>
    <property type="project" value="InterPro"/>
</dbReference>
<dbReference type="GO" id="GO:0051082">
    <property type="term" value="F:unfolded protein binding"/>
    <property type="evidence" value="ECO:0007669"/>
    <property type="project" value="UniProtKB-UniRule"/>
</dbReference>
<dbReference type="GO" id="GO:0008270">
    <property type="term" value="F:zinc ion binding"/>
    <property type="evidence" value="ECO:0007669"/>
    <property type="project" value="UniProtKB-UniRule"/>
</dbReference>
<dbReference type="GO" id="GO:0051085">
    <property type="term" value="P:chaperone cofactor-dependent protein refolding"/>
    <property type="evidence" value="ECO:0007669"/>
    <property type="project" value="TreeGrafter"/>
</dbReference>
<dbReference type="GO" id="GO:0006260">
    <property type="term" value="P:DNA replication"/>
    <property type="evidence" value="ECO:0007669"/>
    <property type="project" value="UniProtKB-KW"/>
</dbReference>
<dbReference type="GO" id="GO:0042026">
    <property type="term" value="P:protein refolding"/>
    <property type="evidence" value="ECO:0007669"/>
    <property type="project" value="TreeGrafter"/>
</dbReference>
<dbReference type="GO" id="GO:0009408">
    <property type="term" value="P:response to heat"/>
    <property type="evidence" value="ECO:0007669"/>
    <property type="project" value="InterPro"/>
</dbReference>
<dbReference type="CDD" id="cd06257">
    <property type="entry name" value="DnaJ"/>
    <property type="match status" value="1"/>
</dbReference>
<dbReference type="CDD" id="cd10747">
    <property type="entry name" value="DnaJ_C"/>
    <property type="match status" value="1"/>
</dbReference>
<dbReference type="CDD" id="cd10719">
    <property type="entry name" value="DnaJ_zf"/>
    <property type="match status" value="1"/>
</dbReference>
<dbReference type="FunFam" id="1.10.287.110:FF:000034">
    <property type="entry name" value="Chaperone protein DnaJ"/>
    <property type="match status" value="1"/>
</dbReference>
<dbReference type="FunFam" id="2.10.230.10:FF:000002">
    <property type="entry name" value="Molecular chaperone DnaJ"/>
    <property type="match status" value="1"/>
</dbReference>
<dbReference type="FunFam" id="2.60.260.20:FF:000004">
    <property type="entry name" value="Molecular chaperone DnaJ"/>
    <property type="match status" value="1"/>
</dbReference>
<dbReference type="Gene3D" id="1.10.287.110">
    <property type="entry name" value="DnaJ domain"/>
    <property type="match status" value="1"/>
</dbReference>
<dbReference type="Gene3D" id="2.10.230.10">
    <property type="entry name" value="Heat shock protein DnaJ, cysteine-rich domain"/>
    <property type="match status" value="1"/>
</dbReference>
<dbReference type="Gene3D" id="2.60.260.20">
    <property type="entry name" value="Urease metallochaperone UreE, N-terminal domain"/>
    <property type="match status" value="2"/>
</dbReference>
<dbReference type="HAMAP" id="MF_01152">
    <property type="entry name" value="DnaJ"/>
    <property type="match status" value="1"/>
</dbReference>
<dbReference type="InterPro" id="IPR012724">
    <property type="entry name" value="DnaJ"/>
</dbReference>
<dbReference type="InterPro" id="IPR002939">
    <property type="entry name" value="DnaJ_C"/>
</dbReference>
<dbReference type="InterPro" id="IPR001623">
    <property type="entry name" value="DnaJ_domain"/>
</dbReference>
<dbReference type="InterPro" id="IPR018253">
    <property type="entry name" value="DnaJ_domain_CS"/>
</dbReference>
<dbReference type="InterPro" id="IPR008971">
    <property type="entry name" value="HSP40/DnaJ_pept-bd"/>
</dbReference>
<dbReference type="InterPro" id="IPR001305">
    <property type="entry name" value="HSP_DnaJ_Cys-rich_dom"/>
</dbReference>
<dbReference type="InterPro" id="IPR036410">
    <property type="entry name" value="HSP_DnaJ_Cys-rich_dom_sf"/>
</dbReference>
<dbReference type="InterPro" id="IPR036869">
    <property type="entry name" value="J_dom_sf"/>
</dbReference>
<dbReference type="NCBIfam" id="TIGR02349">
    <property type="entry name" value="DnaJ_bact"/>
    <property type="match status" value="1"/>
</dbReference>
<dbReference type="NCBIfam" id="NF008035">
    <property type="entry name" value="PRK10767.1"/>
    <property type="match status" value="1"/>
</dbReference>
<dbReference type="PANTHER" id="PTHR43096:SF48">
    <property type="entry name" value="CHAPERONE PROTEIN DNAJ"/>
    <property type="match status" value="1"/>
</dbReference>
<dbReference type="PANTHER" id="PTHR43096">
    <property type="entry name" value="DNAJ HOMOLOG 1, MITOCHONDRIAL-RELATED"/>
    <property type="match status" value="1"/>
</dbReference>
<dbReference type="Pfam" id="PF00226">
    <property type="entry name" value="DnaJ"/>
    <property type="match status" value="1"/>
</dbReference>
<dbReference type="Pfam" id="PF01556">
    <property type="entry name" value="DnaJ_C"/>
    <property type="match status" value="1"/>
</dbReference>
<dbReference type="Pfam" id="PF00684">
    <property type="entry name" value="DnaJ_CXXCXGXG"/>
    <property type="match status" value="1"/>
</dbReference>
<dbReference type="PRINTS" id="PR00625">
    <property type="entry name" value="JDOMAIN"/>
</dbReference>
<dbReference type="SMART" id="SM00271">
    <property type="entry name" value="DnaJ"/>
    <property type="match status" value="1"/>
</dbReference>
<dbReference type="SUPFAM" id="SSF46565">
    <property type="entry name" value="Chaperone J-domain"/>
    <property type="match status" value="1"/>
</dbReference>
<dbReference type="SUPFAM" id="SSF57938">
    <property type="entry name" value="DnaJ/Hsp40 cysteine-rich domain"/>
    <property type="match status" value="1"/>
</dbReference>
<dbReference type="SUPFAM" id="SSF49493">
    <property type="entry name" value="HSP40/DnaJ peptide-binding domain"/>
    <property type="match status" value="2"/>
</dbReference>
<dbReference type="PROSITE" id="PS00636">
    <property type="entry name" value="DNAJ_1"/>
    <property type="match status" value="1"/>
</dbReference>
<dbReference type="PROSITE" id="PS50076">
    <property type="entry name" value="DNAJ_2"/>
    <property type="match status" value="1"/>
</dbReference>
<dbReference type="PROSITE" id="PS51188">
    <property type="entry name" value="ZF_CR"/>
    <property type="match status" value="1"/>
</dbReference>
<organism>
    <name type="scientific">Syntrophotalea carbinolica (strain DSM 2380 / NBRC 103641 / GraBd1)</name>
    <name type="common">Pelobacter carbinolicus</name>
    <dbReference type="NCBI Taxonomy" id="338963"/>
    <lineage>
        <taxon>Bacteria</taxon>
        <taxon>Pseudomonadati</taxon>
        <taxon>Thermodesulfobacteriota</taxon>
        <taxon>Desulfuromonadia</taxon>
        <taxon>Desulfuromonadales</taxon>
        <taxon>Syntrophotaleaceae</taxon>
        <taxon>Syntrophotalea</taxon>
    </lineage>
</organism>
<keyword id="KW-0143">Chaperone</keyword>
<keyword id="KW-0963">Cytoplasm</keyword>
<keyword id="KW-0235">DNA replication</keyword>
<keyword id="KW-0479">Metal-binding</keyword>
<keyword id="KW-1185">Reference proteome</keyword>
<keyword id="KW-0677">Repeat</keyword>
<keyword id="KW-0346">Stress response</keyword>
<keyword id="KW-0862">Zinc</keyword>
<keyword id="KW-0863">Zinc-finger</keyword>
<evidence type="ECO:0000255" key="1">
    <source>
        <dbReference type="HAMAP-Rule" id="MF_01152"/>
    </source>
</evidence>
<reference key="1">
    <citation type="submission" date="2005-10" db="EMBL/GenBank/DDBJ databases">
        <title>Complete sequence of Pelobacter carbinolicus DSM 2380.</title>
        <authorList>
            <person name="Copeland A."/>
            <person name="Lucas S."/>
            <person name="Lapidus A."/>
            <person name="Barry K."/>
            <person name="Detter J.C."/>
            <person name="Glavina T."/>
            <person name="Hammon N."/>
            <person name="Israni S."/>
            <person name="Pitluck S."/>
            <person name="Chertkov O."/>
            <person name="Schmutz J."/>
            <person name="Larimer F."/>
            <person name="Land M."/>
            <person name="Kyrpides N."/>
            <person name="Ivanova N."/>
            <person name="Richardson P."/>
        </authorList>
    </citation>
    <scope>NUCLEOTIDE SEQUENCE [LARGE SCALE GENOMIC DNA]</scope>
    <source>
        <strain>DSM 2380 / NBRC 103641 / GraBd1</strain>
    </source>
</reference>